<sequence length="403" mass="45515">MSDIKKVVLAYSGGLDTSVIVRWLQDTYNCEVVTFTADIGQGEEVEPARAKAEALGVKEIYIEDLREEFVRDYVFPMFRANTIYEGEYLLGTSIARPLIAKRLIDIANETGADAISHGATGKGNDQVRFELGAYALKPGVKVIAPWREWDLNSREKLLKYCEERNIPVEMKKGKSPYSMDANLLHISYEGINLEDPWAEAEEDMWRWSVSPEAAPDKPTYVELTYRKGDIVAVDGQEMKPHVVLETLNKLAGENGIGRLDIVENRYVGMKSRGCYETPGGTIMLRAHRAIESITLDREVAHLKDSLMPRYAEVIYNGYWWSPEREALQALIDQTQNYVNGTVRLKLYKGNVDVVGRKSDDSLFDEKIATFEEDQGAYDQKDAEGFIKLNALRLRIAAGKGRKL</sequence>
<keyword id="KW-0028">Amino-acid biosynthesis</keyword>
<keyword id="KW-0055">Arginine biosynthesis</keyword>
<keyword id="KW-0067">ATP-binding</keyword>
<keyword id="KW-0963">Cytoplasm</keyword>
<keyword id="KW-0436">Ligase</keyword>
<keyword id="KW-0547">Nucleotide-binding</keyword>
<accession>A1U3U4</accession>
<evidence type="ECO:0000255" key="1">
    <source>
        <dbReference type="HAMAP-Rule" id="MF_00005"/>
    </source>
</evidence>
<protein>
    <recommendedName>
        <fullName evidence="1">Argininosuccinate synthase</fullName>
        <ecNumber evidence="1">6.3.4.5</ecNumber>
    </recommendedName>
    <alternativeName>
        <fullName evidence="1">Citrulline--aspartate ligase</fullName>
    </alternativeName>
</protein>
<comment type="catalytic activity">
    <reaction evidence="1">
        <text>L-citrulline + L-aspartate + ATP = 2-(N(omega)-L-arginino)succinate + AMP + diphosphate + H(+)</text>
        <dbReference type="Rhea" id="RHEA:10932"/>
        <dbReference type="ChEBI" id="CHEBI:15378"/>
        <dbReference type="ChEBI" id="CHEBI:29991"/>
        <dbReference type="ChEBI" id="CHEBI:30616"/>
        <dbReference type="ChEBI" id="CHEBI:33019"/>
        <dbReference type="ChEBI" id="CHEBI:57472"/>
        <dbReference type="ChEBI" id="CHEBI:57743"/>
        <dbReference type="ChEBI" id="CHEBI:456215"/>
        <dbReference type="EC" id="6.3.4.5"/>
    </reaction>
</comment>
<comment type="pathway">
    <text evidence="1">Amino-acid biosynthesis; L-arginine biosynthesis; L-arginine from L-ornithine and carbamoyl phosphate: step 2/3.</text>
</comment>
<comment type="subunit">
    <text evidence="1">Homotetramer.</text>
</comment>
<comment type="subcellular location">
    <subcellularLocation>
        <location evidence="1">Cytoplasm</location>
    </subcellularLocation>
</comment>
<comment type="similarity">
    <text evidence="1">Belongs to the argininosuccinate synthase family. Type 1 subfamily.</text>
</comment>
<reference key="1">
    <citation type="journal article" date="2011" name="Appl. Environ. Microbiol.">
        <title>Genomic potential of Marinobacter aquaeolei, a biogeochemical 'opportunitroph'.</title>
        <authorList>
            <person name="Singer E."/>
            <person name="Webb E.A."/>
            <person name="Nelson W.C."/>
            <person name="Heidelberg J.F."/>
            <person name="Ivanova N."/>
            <person name="Pati A."/>
            <person name="Edwards K.J."/>
        </authorList>
    </citation>
    <scope>NUCLEOTIDE SEQUENCE [LARGE SCALE GENOMIC DNA]</scope>
    <source>
        <strain>ATCC 700491 / DSM 11845 / VT8</strain>
    </source>
</reference>
<gene>
    <name evidence="1" type="primary">argG</name>
    <name type="ordered locus">Maqu_2588</name>
</gene>
<name>ASSY_MARN8</name>
<organism>
    <name type="scientific">Marinobacter nauticus (strain ATCC 700491 / DSM 11845 / VT8)</name>
    <name type="common">Marinobacter aquaeolei</name>
    <dbReference type="NCBI Taxonomy" id="351348"/>
    <lineage>
        <taxon>Bacteria</taxon>
        <taxon>Pseudomonadati</taxon>
        <taxon>Pseudomonadota</taxon>
        <taxon>Gammaproteobacteria</taxon>
        <taxon>Pseudomonadales</taxon>
        <taxon>Marinobacteraceae</taxon>
        <taxon>Marinobacter</taxon>
    </lineage>
</organism>
<feature type="chain" id="PRO_1000000405" description="Argininosuccinate synthase">
    <location>
        <begin position="1"/>
        <end position="403"/>
    </location>
</feature>
<feature type="binding site" evidence="1">
    <location>
        <begin position="10"/>
        <end position="18"/>
    </location>
    <ligand>
        <name>ATP</name>
        <dbReference type="ChEBI" id="CHEBI:30616"/>
    </ligand>
</feature>
<feature type="binding site" evidence="1">
    <location>
        <position position="37"/>
    </location>
    <ligand>
        <name>ATP</name>
        <dbReference type="ChEBI" id="CHEBI:30616"/>
    </ligand>
</feature>
<feature type="binding site" evidence="1">
    <location>
        <position position="88"/>
    </location>
    <ligand>
        <name>L-citrulline</name>
        <dbReference type="ChEBI" id="CHEBI:57743"/>
    </ligand>
</feature>
<feature type="binding site" evidence="1">
    <location>
        <position position="93"/>
    </location>
    <ligand>
        <name>L-citrulline</name>
        <dbReference type="ChEBI" id="CHEBI:57743"/>
    </ligand>
</feature>
<feature type="binding site" evidence="1">
    <location>
        <position position="118"/>
    </location>
    <ligand>
        <name>ATP</name>
        <dbReference type="ChEBI" id="CHEBI:30616"/>
    </ligand>
</feature>
<feature type="binding site" evidence="1">
    <location>
        <position position="120"/>
    </location>
    <ligand>
        <name>L-aspartate</name>
        <dbReference type="ChEBI" id="CHEBI:29991"/>
    </ligand>
</feature>
<feature type="binding site" evidence="1">
    <location>
        <position position="124"/>
    </location>
    <ligand>
        <name>L-aspartate</name>
        <dbReference type="ChEBI" id="CHEBI:29991"/>
    </ligand>
</feature>
<feature type="binding site" evidence="1">
    <location>
        <position position="124"/>
    </location>
    <ligand>
        <name>L-citrulline</name>
        <dbReference type="ChEBI" id="CHEBI:57743"/>
    </ligand>
</feature>
<feature type="binding site" evidence="1">
    <location>
        <position position="125"/>
    </location>
    <ligand>
        <name>L-aspartate</name>
        <dbReference type="ChEBI" id="CHEBI:29991"/>
    </ligand>
</feature>
<feature type="binding site" evidence="1">
    <location>
        <position position="128"/>
    </location>
    <ligand>
        <name>L-citrulline</name>
        <dbReference type="ChEBI" id="CHEBI:57743"/>
    </ligand>
</feature>
<feature type="binding site" evidence="1">
    <location>
        <position position="178"/>
    </location>
    <ligand>
        <name>L-citrulline</name>
        <dbReference type="ChEBI" id="CHEBI:57743"/>
    </ligand>
</feature>
<feature type="binding site" evidence="1">
    <location>
        <position position="187"/>
    </location>
    <ligand>
        <name>L-citrulline</name>
        <dbReference type="ChEBI" id="CHEBI:57743"/>
    </ligand>
</feature>
<feature type="binding site" evidence="1">
    <location>
        <position position="263"/>
    </location>
    <ligand>
        <name>L-citrulline</name>
        <dbReference type="ChEBI" id="CHEBI:57743"/>
    </ligand>
</feature>
<feature type="binding site" evidence="1">
    <location>
        <position position="275"/>
    </location>
    <ligand>
        <name>L-citrulline</name>
        <dbReference type="ChEBI" id="CHEBI:57743"/>
    </ligand>
</feature>
<dbReference type="EC" id="6.3.4.5" evidence="1"/>
<dbReference type="EMBL" id="CP000514">
    <property type="protein sequence ID" value="ABM19663.1"/>
    <property type="molecule type" value="Genomic_DNA"/>
</dbReference>
<dbReference type="RefSeq" id="WP_011786034.1">
    <property type="nucleotide sequence ID" value="NC_008740.1"/>
</dbReference>
<dbReference type="SMR" id="A1U3U4"/>
<dbReference type="STRING" id="351348.Maqu_2588"/>
<dbReference type="KEGG" id="maq:Maqu_2588"/>
<dbReference type="eggNOG" id="COG0137">
    <property type="taxonomic scope" value="Bacteria"/>
</dbReference>
<dbReference type="HOGENOM" id="CLU_032784_4_2_6"/>
<dbReference type="OrthoDB" id="9801641at2"/>
<dbReference type="UniPathway" id="UPA00068">
    <property type="reaction ID" value="UER00113"/>
</dbReference>
<dbReference type="Proteomes" id="UP000000998">
    <property type="component" value="Chromosome"/>
</dbReference>
<dbReference type="GO" id="GO:0005737">
    <property type="term" value="C:cytoplasm"/>
    <property type="evidence" value="ECO:0007669"/>
    <property type="project" value="UniProtKB-SubCell"/>
</dbReference>
<dbReference type="GO" id="GO:0004055">
    <property type="term" value="F:argininosuccinate synthase activity"/>
    <property type="evidence" value="ECO:0007669"/>
    <property type="project" value="UniProtKB-UniRule"/>
</dbReference>
<dbReference type="GO" id="GO:0005524">
    <property type="term" value="F:ATP binding"/>
    <property type="evidence" value="ECO:0007669"/>
    <property type="project" value="UniProtKB-UniRule"/>
</dbReference>
<dbReference type="GO" id="GO:0000053">
    <property type="term" value="P:argininosuccinate metabolic process"/>
    <property type="evidence" value="ECO:0007669"/>
    <property type="project" value="TreeGrafter"/>
</dbReference>
<dbReference type="GO" id="GO:0006526">
    <property type="term" value="P:L-arginine biosynthetic process"/>
    <property type="evidence" value="ECO:0007669"/>
    <property type="project" value="UniProtKB-UniRule"/>
</dbReference>
<dbReference type="GO" id="GO:0000050">
    <property type="term" value="P:urea cycle"/>
    <property type="evidence" value="ECO:0007669"/>
    <property type="project" value="TreeGrafter"/>
</dbReference>
<dbReference type="CDD" id="cd01999">
    <property type="entry name" value="ASS"/>
    <property type="match status" value="1"/>
</dbReference>
<dbReference type="FunFam" id="1.20.5.470:FF:000001">
    <property type="entry name" value="Argininosuccinate synthase"/>
    <property type="match status" value="1"/>
</dbReference>
<dbReference type="FunFam" id="3.40.50.620:FF:000019">
    <property type="entry name" value="Argininosuccinate synthase"/>
    <property type="match status" value="1"/>
</dbReference>
<dbReference type="FunFam" id="3.90.1260.10:FF:000007">
    <property type="entry name" value="Argininosuccinate synthase"/>
    <property type="match status" value="1"/>
</dbReference>
<dbReference type="Gene3D" id="3.90.1260.10">
    <property type="entry name" value="Argininosuccinate synthetase, chain A, domain 2"/>
    <property type="match status" value="1"/>
</dbReference>
<dbReference type="Gene3D" id="3.40.50.620">
    <property type="entry name" value="HUPs"/>
    <property type="match status" value="1"/>
</dbReference>
<dbReference type="Gene3D" id="1.20.5.470">
    <property type="entry name" value="Single helix bin"/>
    <property type="match status" value="1"/>
</dbReference>
<dbReference type="HAMAP" id="MF_00005">
    <property type="entry name" value="Arg_succ_synth_type1"/>
    <property type="match status" value="1"/>
</dbReference>
<dbReference type="InterPro" id="IPR048268">
    <property type="entry name" value="Arginosuc_syn_C"/>
</dbReference>
<dbReference type="InterPro" id="IPR048267">
    <property type="entry name" value="Arginosuc_syn_N"/>
</dbReference>
<dbReference type="InterPro" id="IPR001518">
    <property type="entry name" value="Arginosuc_synth"/>
</dbReference>
<dbReference type="InterPro" id="IPR018223">
    <property type="entry name" value="Arginosuc_synth_CS"/>
</dbReference>
<dbReference type="InterPro" id="IPR023434">
    <property type="entry name" value="Arginosuc_synth_type_1_subfam"/>
</dbReference>
<dbReference type="InterPro" id="IPR024074">
    <property type="entry name" value="AS_cat/multimer_dom_body"/>
</dbReference>
<dbReference type="InterPro" id="IPR014729">
    <property type="entry name" value="Rossmann-like_a/b/a_fold"/>
</dbReference>
<dbReference type="NCBIfam" id="TIGR00032">
    <property type="entry name" value="argG"/>
    <property type="match status" value="1"/>
</dbReference>
<dbReference type="NCBIfam" id="NF001770">
    <property type="entry name" value="PRK00509.1"/>
    <property type="match status" value="1"/>
</dbReference>
<dbReference type="PANTHER" id="PTHR11587">
    <property type="entry name" value="ARGININOSUCCINATE SYNTHASE"/>
    <property type="match status" value="1"/>
</dbReference>
<dbReference type="PANTHER" id="PTHR11587:SF2">
    <property type="entry name" value="ARGININOSUCCINATE SYNTHASE"/>
    <property type="match status" value="1"/>
</dbReference>
<dbReference type="Pfam" id="PF20979">
    <property type="entry name" value="Arginosuc_syn_C"/>
    <property type="match status" value="1"/>
</dbReference>
<dbReference type="Pfam" id="PF00764">
    <property type="entry name" value="Arginosuc_synth"/>
    <property type="match status" value="1"/>
</dbReference>
<dbReference type="SUPFAM" id="SSF52402">
    <property type="entry name" value="Adenine nucleotide alpha hydrolases-like"/>
    <property type="match status" value="1"/>
</dbReference>
<dbReference type="SUPFAM" id="SSF69864">
    <property type="entry name" value="Argininosuccinate synthetase, C-terminal domain"/>
    <property type="match status" value="1"/>
</dbReference>
<dbReference type="PROSITE" id="PS00564">
    <property type="entry name" value="ARGININOSUCCIN_SYN_1"/>
    <property type="match status" value="1"/>
</dbReference>
<dbReference type="PROSITE" id="PS00565">
    <property type="entry name" value="ARGININOSUCCIN_SYN_2"/>
    <property type="match status" value="1"/>
</dbReference>
<proteinExistence type="inferred from homology"/>